<keyword id="KW-0997">Cell inner membrane</keyword>
<keyword id="KW-1003">Cell membrane</keyword>
<keyword id="KW-0472">Membrane</keyword>
<keyword id="KW-1185">Reference proteome</keyword>
<keyword id="KW-0812">Transmembrane</keyword>
<keyword id="KW-1133">Transmembrane helix</keyword>
<comment type="function">
    <text evidence="1">Plays a role in cell envelope biogenesis, maintenance of cell envelope integrity and membrane homeostasis.</text>
</comment>
<comment type="subcellular location">
    <subcellularLocation>
        <location evidence="1">Cell inner membrane</location>
        <topology evidence="1">Multi-pass membrane protein</topology>
    </subcellularLocation>
</comment>
<comment type="similarity">
    <text evidence="1">Belongs to the YciB family.</text>
</comment>
<sequence length="186" mass="21397">MKFLFDLFPVILFFAAFKVAGIYVATTVAMVATVAQIAWVWFKHRKVDAMQWLSLLIIVVFGGATLIFHNDTFIKWKPTVLYWMFGVVLLGSAVLLRKNLIRAMMEQQVSLPEPMWGRLNLVWSLFFLAMGGLNLYVAYHFDTDVWVNFKLFGSMGLMVVFILVQSVWLARHMQERPAGANPQDDR</sequence>
<accession>Q8XYL2</accession>
<dbReference type="EMBL" id="AL646052">
    <property type="protein sequence ID" value="CAD15448.1"/>
    <property type="molecule type" value="Genomic_DNA"/>
</dbReference>
<dbReference type="RefSeq" id="WP_011001684.1">
    <property type="nucleotide sequence ID" value="NC_003295.1"/>
</dbReference>
<dbReference type="STRING" id="267608.RSc1746"/>
<dbReference type="EnsemblBacteria" id="CAD15448">
    <property type="protein sequence ID" value="CAD15448"/>
    <property type="gene ID" value="RSc1746"/>
</dbReference>
<dbReference type="KEGG" id="rso:RSc1746"/>
<dbReference type="eggNOG" id="COG2917">
    <property type="taxonomic scope" value="Bacteria"/>
</dbReference>
<dbReference type="HOGENOM" id="CLU_089554_2_0_4"/>
<dbReference type="Proteomes" id="UP000001436">
    <property type="component" value="Chromosome"/>
</dbReference>
<dbReference type="GO" id="GO:0005886">
    <property type="term" value="C:plasma membrane"/>
    <property type="evidence" value="ECO:0007669"/>
    <property type="project" value="UniProtKB-SubCell"/>
</dbReference>
<dbReference type="HAMAP" id="MF_00189">
    <property type="entry name" value="YciB"/>
    <property type="match status" value="1"/>
</dbReference>
<dbReference type="InterPro" id="IPR006008">
    <property type="entry name" value="YciB"/>
</dbReference>
<dbReference type="NCBIfam" id="TIGR00997">
    <property type="entry name" value="ispZ"/>
    <property type="match status" value="1"/>
</dbReference>
<dbReference type="NCBIfam" id="NF001325">
    <property type="entry name" value="PRK00259.1-3"/>
    <property type="match status" value="1"/>
</dbReference>
<dbReference type="PANTHER" id="PTHR36917:SF1">
    <property type="entry name" value="INNER MEMBRANE-SPANNING PROTEIN YCIB"/>
    <property type="match status" value="1"/>
</dbReference>
<dbReference type="PANTHER" id="PTHR36917">
    <property type="entry name" value="INTRACELLULAR SEPTATION PROTEIN A-RELATED"/>
    <property type="match status" value="1"/>
</dbReference>
<dbReference type="Pfam" id="PF04279">
    <property type="entry name" value="IspA"/>
    <property type="match status" value="1"/>
</dbReference>
<feature type="chain" id="PRO_0000206542" description="Inner membrane-spanning protein YciB">
    <location>
        <begin position="1"/>
        <end position="186"/>
    </location>
</feature>
<feature type="transmembrane region" description="Helical" evidence="1">
    <location>
        <begin position="3"/>
        <end position="23"/>
    </location>
</feature>
<feature type="transmembrane region" description="Helical" evidence="1">
    <location>
        <begin position="24"/>
        <end position="44"/>
    </location>
</feature>
<feature type="transmembrane region" description="Helical" evidence="1">
    <location>
        <begin position="49"/>
        <end position="69"/>
    </location>
</feature>
<feature type="transmembrane region" description="Helical" evidence="1">
    <location>
        <begin position="76"/>
        <end position="96"/>
    </location>
</feature>
<feature type="transmembrane region" description="Helical" evidence="1">
    <location>
        <begin position="121"/>
        <end position="141"/>
    </location>
</feature>
<feature type="transmembrane region" description="Helical" evidence="1">
    <location>
        <begin position="149"/>
        <end position="169"/>
    </location>
</feature>
<gene>
    <name evidence="1" type="primary">yciB</name>
    <name type="ordered locus">RSc1746</name>
    <name type="ORF">RS02934</name>
</gene>
<name>YCIB_RALN1</name>
<organism>
    <name type="scientific">Ralstonia nicotianae (strain ATCC BAA-1114 / GMI1000)</name>
    <name type="common">Ralstonia solanacearum</name>
    <dbReference type="NCBI Taxonomy" id="267608"/>
    <lineage>
        <taxon>Bacteria</taxon>
        <taxon>Pseudomonadati</taxon>
        <taxon>Pseudomonadota</taxon>
        <taxon>Betaproteobacteria</taxon>
        <taxon>Burkholderiales</taxon>
        <taxon>Burkholderiaceae</taxon>
        <taxon>Ralstonia</taxon>
        <taxon>Ralstonia solanacearum species complex</taxon>
    </lineage>
</organism>
<evidence type="ECO:0000255" key="1">
    <source>
        <dbReference type="HAMAP-Rule" id="MF_00189"/>
    </source>
</evidence>
<reference key="1">
    <citation type="journal article" date="2002" name="Nature">
        <title>Genome sequence of the plant pathogen Ralstonia solanacearum.</title>
        <authorList>
            <person name="Salanoubat M."/>
            <person name="Genin S."/>
            <person name="Artiguenave F."/>
            <person name="Gouzy J."/>
            <person name="Mangenot S."/>
            <person name="Arlat M."/>
            <person name="Billault A."/>
            <person name="Brottier P."/>
            <person name="Camus J.-C."/>
            <person name="Cattolico L."/>
            <person name="Chandler M."/>
            <person name="Choisne N."/>
            <person name="Claudel-Renard C."/>
            <person name="Cunnac S."/>
            <person name="Demange N."/>
            <person name="Gaspin C."/>
            <person name="Lavie M."/>
            <person name="Moisan A."/>
            <person name="Robert C."/>
            <person name="Saurin W."/>
            <person name="Schiex T."/>
            <person name="Siguier P."/>
            <person name="Thebault P."/>
            <person name="Whalen M."/>
            <person name="Wincker P."/>
            <person name="Levy M."/>
            <person name="Weissenbach J."/>
            <person name="Boucher C.A."/>
        </authorList>
    </citation>
    <scope>NUCLEOTIDE SEQUENCE [LARGE SCALE GENOMIC DNA]</scope>
    <source>
        <strain>ATCC BAA-1114 / GMI1000</strain>
    </source>
</reference>
<protein>
    <recommendedName>
        <fullName evidence="1">Inner membrane-spanning protein YciB</fullName>
    </recommendedName>
</protein>
<proteinExistence type="inferred from homology"/>